<reference key="1">
    <citation type="submission" date="2006-03" db="EMBL/GenBank/DDBJ databases">
        <title>Complete sequence of Methylobacillus flagellatus KT.</title>
        <authorList>
            <consortium name="US DOE Joint Genome Institute"/>
            <person name="Copeland A."/>
            <person name="Lucas S."/>
            <person name="Lapidus A."/>
            <person name="Barry K."/>
            <person name="Detter J.C."/>
            <person name="Glavina del Rio T."/>
            <person name="Hammon N."/>
            <person name="Israni S."/>
            <person name="Dalin E."/>
            <person name="Tice H."/>
            <person name="Pitluck S."/>
            <person name="Brettin T."/>
            <person name="Bruce D."/>
            <person name="Han C."/>
            <person name="Tapia R."/>
            <person name="Saunders E."/>
            <person name="Gilna P."/>
            <person name="Schmutz J."/>
            <person name="Larimer F."/>
            <person name="Land M."/>
            <person name="Kyrpides N."/>
            <person name="Anderson I."/>
            <person name="Richardson P."/>
        </authorList>
    </citation>
    <scope>NUCLEOTIDE SEQUENCE [LARGE SCALE GENOMIC DNA]</scope>
    <source>
        <strain>ATCC 51484 / DSM 6875 / VKM B-1610 / KT</strain>
    </source>
</reference>
<evidence type="ECO:0000255" key="1">
    <source>
        <dbReference type="HAMAP-Rule" id="MF_00184"/>
    </source>
</evidence>
<evidence type="ECO:0000255" key="2">
    <source>
        <dbReference type="PROSITE-ProRule" id="PRU01228"/>
    </source>
</evidence>
<dbReference type="EC" id="6.1.1.3" evidence="1"/>
<dbReference type="EMBL" id="CP000284">
    <property type="protein sequence ID" value="ABE50270.1"/>
    <property type="molecule type" value="Genomic_DNA"/>
</dbReference>
<dbReference type="RefSeq" id="WP_011480224.1">
    <property type="nucleotide sequence ID" value="NC_007947.1"/>
</dbReference>
<dbReference type="SMR" id="Q1GZR7"/>
<dbReference type="STRING" id="265072.Mfla_2003"/>
<dbReference type="KEGG" id="mfa:Mfla_2003"/>
<dbReference type="eggNOG" id="COG0441">
    <property type="taxonomic scope" value="Bacteria"/>
</dbReference>
<dbReference type="HOGENOM" id="CLU_008554_0_1_4"/>
<dbReference type="OrthoDB" id="9802304at2"/>
<dbReference type="Proteomes" id="UP000002440">
    <property type="component" value="Chromosome"/>
</dbReference>
<dbReference type="GO" id="GO:0005829">
    <property type="term" value="C:cytosol"/>
    <property type="evidence" value="ECO:0007669"/>
    <property type="project" value="TreeGrafter"/>
</dbReference>
<dbReference type="GO" id="GO:0005524">
    <property type="term" value="F:ATP binding"/>
    <property type="evidence" value="ECO:0007669"/>
    <property type="project" value="UniProtKB-UniRule"/>
</dbReference>
<dbReference type="GO" id="GO:0046872">
    <property type="term" value="F:metal ion binding"/>
    <property type="evidence" value="ECO:0007669"/>
    <property type="project" value="UniProtKB-KW"/>
</dbReference>
<dbReference type="GO" id="GO:0004829">
    <property type="term" value="F:threonine-tRNA ligase activity"/>
    <property type="evidence" value="ECO:0007669"/>
    <property type="project" value="UniProtKB-UniRule"/>
</dbReference>
<dbReference type="GO" id="GO:0000049">
    <property type="term" value="F:tRNA binding"/>
    <property type="evidence" value="ECO:0007669"/>
    <property type="project" value="UniProtKB-KW"/>
</dbReference>
<dbReference type="GO" id="GO:0006435">
    <property type="term" value="P:threonyl-tRNA aminoacylation"/>
    <property type="evidence" value="ECO:0007669"/>
    <property type="project" value="UniProtKB-UniRule"/>
</dbReference>
<dbReference type="CDD" id="cd01667">
    <property type="entry name" value="TGS_ThrRS"/>
    <property type="match status" value="1"/>
</dbReference>
<dbReference type="CDD" id="cd00860">
    <property type="entry name" value="ThrRS_anticodon"/>
    <property type="match status" value="1"/>
</dbReference>
<dbReference type="CDD" id="cd00771">
    <property type="entry name" value="ThrRS_core"/>
    <property type="match status" value="1"/>
</dbReference>
<dbReference type="FunFam" id="3.10.20.30:FF:000005">
    <property type="entry name" value="Threonine--tRNA ligase"/>
    <property type="match status" value="1"/>
</dbReference>
<dbReference type="FunFam" id="3.30.54.20:FF:000002">
    <property type="entry name" value="Threonine--tRNA ligase"/>
    <property type="match status" value="1"/>
</dbReference>
<dbReference type="FunFam" id="3.30.930.10:FF:000002">
    <property type="entry name" value="Threonine--tRNA ligase"/>
    <property type="match status" value="1"/>
</dbReference>
<dbReference type="FunFam" id="3.40.50.800:FF:000001">
    <property type="entry name" value="Threonine--tRNA ligase"/>
    <property type="match status" value="1"/>
</dbReference>
<dbReference type="FunFam" id="3.30.980.10:FF:000005">
    <property type="entry name" value="Threonyl-tRNA synthetase, mitochondrial"/>
    <property type="match status" value="1"/>
</dbReference>
<dbReference type="Gene3D" id="3.10.20.30">
    <property type="match status" value="1"/>
</dbReference>
<dbReference type="Gene3D" id="3.30.54.20">
    <property type="match status" value="1"/>
</dbReference>
<dbReference type="Gene3D" id="3.40.50.800">
    <property type="entry name" value="Anticodon-binding domain"/>
    <property type="match status" value="1"/>
</dbReference>
<dbReference type="Gene3D" id="3.30.930.10">
    <property type="entry name" value="Bira Bifunctional Protein, Domain 2"/>
    <property type="match status" value="1"/>
</dbReference>
<dbReference type="Gene3D" id="3.30.980.10">
    <property type="entry name" value="Threonyl-trna Synthetase, Chain A, domain 2"/>
    <property type="match status" value="1"/>
</dbReference>
<dbReference type="HAMAP" id="MF_00184">
    <property type="entry name" value="Thr_tRNA_synth"/>
    <property type="match status" value="1"/>
</dbReference>
<dbReference type="InterPro" id="IPR002314">
    <property type="entry name" value="aa-tRNA-synt_IIb"/>
</dbReference>
<dbReference type="InterPro" id="IPR006195">
    <property type="entry name" value="aa-tRNA-synth_II"/>
</dbReference>
<dbReference type="InterPro" id="IPR045864">
    <property type="entry name" value="aa-tRNA-synth_II/BPL/LPL"/>
</dbReference>
<dbReference type="InterPro" id="IPR004154">
    <property type="entry name" value="Anticodon-bd"/>
</dbReference>
<dbReference type="InterPro" id="IPR036621">
    <property type="entry name" value="Anticodon-bd_dom_sf"/>
</dbReference>
<dbReference type="InterPro" id="IPR012675">
    <property type="entry name" value="Beta-grasp_dom_sf"/>
</dbReference>
<dbReference type="InterPro" id="IPR004095">
    <property type="entry name" value="TGS"/>
</dbReference>
<dbReference type="InterPro" id="IPR012676">
    <property type="entry name" value="TGS-like"/>
</dbReference>
<dbReference type="InterPro" id="IPR002320">
    <property type="entry name" value="Thr-tRNA-ligase_IIa"/>
</dbReference>
<dbReference type="InterPro" id="IPR018163">
    <property type="entry name" value="Thr/Ala-tRNA-synth_IIc_edit"/>
</dbReference>
<dbReference type="InterPro" id="IPR047246">
    <property type="entry name" value="ThrRS_anticodon"/>
</dbReference>
<dbReference type="InterPro" id="IPR033728">
    <property type="entry name" value="ThrRS_core"/>
</dbReference>
<dbReference type="InterPro" id="IPR012947">
    <property type="entry name" value="tRNA_SAD"/>
</dbReference>
<dbReference type="NCBIfam" id="TIGR00418">
    <property type="entry name" value="thrS"/>
    <property type="match status" value="1"/>
</dbReference>
<dbReference type="PANTHER" id="PTHR11451:SF44">
    <property type="entry name" value="THREONINE--TRNA LIGASE, CHLOROPLASTIC_MITOCHONDRIAL 2"/>
    <property type="match status" value="1"/>
</dbReference>
<dbReference type="PANTHER" id="PTHR11451">
    <property type="entry name" value="THREONINE-TRNA LIGASE"/>
    <property type="match status" value="1"/>
</dbReference>
<dbReference type="Pfam" id="PF03129">
    <property type="entry name" value="HGTP_anticodon"/>
    <property type="match status" value="1"/>
</dbReference>
<dbReference type="Pfam" id="PF02824">
    <property type="entry name" value="TGS"/>
    <property type="match status" value="1"/>
</dbReference>
<dbReference type="Pfam" id="PF00587">
    <property type="entry name" value="tRNA-synt_2b"/>
    <property type="match status" value="1"/>
</dbReference>
<dbReference type="Pfam" id="PF07973">
    <property type="entry name" value="tRNA_SAD"/>
    <property type="match status" value="1"/>
</dbReference>
<dbReference type="PRINTS" id="PR01047">
    <property type="entry name" value="TRNASYNTHTHR"/>
</dbReference>
<dbReference type="SMART" id="SM00863">
    <property type="entry name" value="tRNA_SAD"/>
    <property type="match status" value="1"/>
</dbReference>
<dbReference type="SUPFAM" id="SSF52954">
    <property type="entry name" value="Class II aaRS ABD-related"/>
    <property type="match status" value="1"/>
</dbReference>
<dbReference type="SUPFAM" id="SSF55681">
    <property type="entry name" value="Class II aaRS and biotin synthetases"/>
    <property type="match status" value="1"/>
</dbReference>
<dbReference type="SUPFAM" id="SSF81271">
    <property type="entry name" value="TGS-like"/>
    <property type="match status" value="1"/>
</dbReference>
<dbReference type="SUPFAM" id="SSF55186">
    <property type="entry name" value="ThrRS/AlaRS common domain"/>
    <property type="match status" value="1"/>
</dbReference>
<dbReference type="PROSITE" id="PS50862">
    <property type="entry name" value="AA_TRNA_LIGASE_II"/>
    <property type="match status" value="1"/>
</dbReference>
<dbReference type="PROSITE" id="PS51880">
    <property type="entry name" value="TGS"/>
    <property type="match status" value="1"/>
</dbReference>
<sequence length="635" mass="72347">MPVIRLPDGSERKFDGPVTVAEVAMNIGAGLARAALGGKVNGKAVDTSYLITDDADLSIITDRDAEGLAIIRHSTAHLLAQAVKQLFPDAQVTIGPVIENGFYYDFSYKRPFTPEDLQKIEARMQELAKRDIPIVRTVMERDEAVAYFQSIGEQYKAEIIGSIPADQEISLYTQDDFTDLCRGTHVPSTGKLKAFKLMKVAGAYWRGDSNNEMLQRIYGTAWAKKEDLDAYLHMLEEAEKRDHRKLGRQLDFFHMQDEAPGMVFWHPRGWVIWQEVEQYMRNMFREFGYQEVRTPTIMDRVMWEKSGHWQNYHDNMFTTASENRDYAVKPMNCPGHIQIFNSTLHSYRDLPLRLAEFGSCHRNEPSGALHGLMRVRGFTQDDAHIFCTEDQVKDEVADFIVMLYKAYKDFGFNEVLVKLSTRPEKRVGTDEAWDKAEEALAVALRQNNLDFELQPGEGAFYGPKIEFTLKDSLGRLWQCGTIQLDFNLPERLGAEYVDEDNSRKHPVMLHRAIVGSMERFLGILIENYAGAMPAWLAPVQAMVLNISDGQADYVSSVVAELRKNGFRVDSDLRNEKITYKIREHSLQKLPYLLIAGEREMQTGQVAVRTRKGEDLGSMPLSAFIERLKSDVADKV</sequence>
<protein>
    <recommendedName>
        <fullName evidence="1">Threonine--tRNA ligase</fullName>
        <ecNumber evidence="1">6.1.1.3</ecNumber>
    </recommendedName>
    <alternativeName>
        <fullName evidence="1">Threonyl-tRNA synthetase</fullName>
        <shortName evidence="1">ThrRS</shortName>
    </alternativeName>
</protein>
<feature type="chain" id="PRO_1000020428" description="Threonine--tRNA ligase">
    <location>
        <begin position="1"/>
        <end position="635"/>
    </location>
</feature>
<feature type="domain" description="TGS" evidence="2">
    <location>
        <begin position="1"/>
        <end position="61"/>
    </location>
</feature>
<feature type="region of interest" description="Catalytic" evidence="1">
    <location>
        <begin position="242"/>
        <end position="533"/>
    </location>
</feature>
<feature type="binding site" evidence="1">
    <location>
        <position position="333"/>
    </location>
    <ligand>
        <name>Zn(2+)</name>
        <dbReference type="ChEBI" id="CHEBI:29105"/>
    </ligand>
</feature>
<feature type="binding site" evidence="1">
    <location>
        <position position="384"/>
    </location>
    <ligand>
        <name>Zn(2+)</name>
        <dbReference type="ChEBI" id="CHEBI:29105"/>
    </ligand>
</feature>
<feature type="binding site" evidence="1">
    <location>
        <position position="510"/>
    </location>
    <ligand>
        <name>Zn(2+)</name>
        <dbReference type="ChEBI" id="CHEBI:29105"/>
    </ligand>
</feature>
<organism>
    <name type="scientific">Methylobacillus flagellatus (strain ATCC 51484 / DSM 6875 / VKM B-1610 / KT)</name>
    <dbReference type="NCBI Taxonomy" id="265072"/>
    <lineage>
        <taxon>Bacteria</taxon>
        <taxon>Pseudomonadati</taxon>
        <taxon>Pseudomonadota</taxon>
        <taxon>Betaproteobacteria</taxon>
        <taxon>Nitrosomonadales</taxon>
        <taxon>Methylophilaceae</taxon>
        <taxon>Methylobacillus</taxon>
    </lineage>
</organism>
<name>SYT_METFK</name>
<gene>
    <name evidence="1" type="primary">thrS</name>
    <name type="ordered locus">Mfla_2003</name>
</gene>
<proteinExistence type="inferred from homology"/>
<accession>Q1GZR7</accession>
<keyword id="KW-0030">Aminoacyl-tRNA synthetase</keyword>
<keyword id="KW-0067">ATP-binding</keyword>
<keyword id="KW-0963">Cytoplasm</keyword>
<keyword id="KW-0436">Ligase</keyword>
<keyword id="KW-0479">Metal-binding</keyword>
<keyword id="KW-0547">Nucleotide-binding</keyword>
<keyword id="KW-0648">Protein biosynthesis</keyword>
<keyword id="KW-1185">Reference proteome</keyword>
<keyword id="KW-0694">RNA-binding</keyword>
<keyword id="KW-0820">tRNA-binding</keyword>
<keyword id="KW-0862">Zinc</keyword>
<comment type="function">
    <text evidence="1">Catalyzes the attachment of threonine to tRNA(Thr) in a two-step reaction: L-threonine is first activated by ATP to form Thr-AMP and then transferred to the acceptor end of tRNA(Thr). Also edits incorrectly charged L-seryl-tRNA(Thr).</text>
</comment>
<comment type="catalytic activity">
    <reaction evidence="1">
        <text>tRNA(Thr) + L-threonine + ATP = L-threonyl-tRNA(Thr) + AMP + diphosphate + H(+)</text>
        <dbReference type="Rhea" id="RHEA:24624"/>
        <dbReference type="Rhea" id="RHEA-COMP:9670"/>
        <dbReference type="Rhea" id="RHEA-COMP:9704"/>
        <dbReference type="ChEBI" id="CHEBI:15378"/>
        <dbReference type="ChEBI" id="CHEBI:30616"/>
        <dbReference type="ChEBI" id="CHEBI:33019"/>
        <dbReference type="ChEBI" id="CHEBI:57926"/>
        <dbReference type="ChEBI" id="CHEBI:78442"/>
        <dbReference type="ChEBI" id="CHEBI:78534"/>
        <dbReference type="ChEBI" id="CHEBI:456215"/>
        <dbReference type="EC" id="6.1.1.3"/>
    </reaction>
</comment>
<comment type="cofactor">
    <cofactor evidence="1">
        <name>Zn(2+)</name>
        <dbReference type="ChEBI" id="CHEBI:29105"/>
    </cofactor>
    <text evidence="1">Binds 1 zinc ion per subunit.</text>
</comment>
<comment type="subunit">
    <text evidence="1">Homodimer.</text>
</comment>
<comment type="subcellular location">
    <subcellularLocation>
        <location evidence="1">Cytoplasm</location>
    </subcellularLocation>
</comment>
<comment type="similarity">
    <text evidence="1">Belongs to the class-II aminoacyl-tRNA synthetase family.</text>
</comment>